<proteinExistence type="inferred from homology"/>
<sequence length="649" mass="70175">MPHGLSVCSRSSQLNYSQRCFYKSNSELRRGTSPRLSIPISLAPSQRSRSPPSILGHPELRPRSHSPPPPNPQNSRDFSPVQSLACSRSPAFNCDVHETVQVSKTCGSKPKIPRVDQLSTHCRRHHSLPLHLTHFSKQFNLLHARCSDVLFSSSDRRSLHSVSRTRDPVLQSHSASRVSFHRSLSLPRDLHLQDLRSDSPLHPGESPLRLVQSAPPSPILAEDFLHPLAFPRFVCDQAGILGPSPLHIDPARPTTKALSLCTPPRPAKSTSPCNNSQLPKPTAASDKPAILPTAAASTQPGLLPNSRLRRTATSHLSAPTSPPPASANKRLQRSLHLHSRSPHSSHFRPSRICANSKQQTRARLGHSKRVGQSADLVCQCPPPPPSMLPLLLLPRGKVKAPLRPTLASLSFGSHPIPYHVTSSPPLIQFQHPFPPPSATFSVSPLGVLTTAFALNPTQSAERSCDPESPTPTLGHKTTSLSRLPLPPPHSPHSAQDRASALATDVSNSETKNCPSPTVPPPFLPNHLHPLLPGTDPPTTPRQLSPSPSSLSLRTFLDSAVISCDSSPVLPPSPSPSSHSSSSFQSCTSPPRFPCYPPPPSALDLLFSSTPGTDPFPPPDTPPPHKRTIALERLRLRQCATPFHSCDDVC</sequence>
<comment type="similarity">
    <text evidence="2">Belongs to the tymoviridae protein p69 family.</text>
</comment>
<reference key="1">
    <citation type="journal article" date="1989" name="Virology">
        <title>Nucleotide sequence of the genome of eggplant mosaic tymovirus.</title>
        <authorList>
            <person name="Osorio-Keese M.E."/>
            <person name="Keese P."/>
            <person name="Gibbs A."/>
        </authorList>
    </citation>
    <scope>NUCLEOTIDE SEQUENCE [GENOMIC RNA]</scope>
</reference>
<feature type="chain" id="PRO_0000222941" description="70 kDa protein">
    <location>
        <begin position="1"/>
        <end position="649"/>
    </location>
</feature>
<feature type="region of interest" description="Disordered" evidence="1">
    <location>
        <begin position="28"/>
        <end position="80"/>
    </location>
</feature>
<feature type="region of interest" description="Disordered" evidence="1">
    <location>
        <begin position="257"/>
        <end position="286"/>
    </location>
</feature>
<feature type="region of interest" description="Disordered" evidence="1">
    <location>
        <begin position="311"/>
        <end position="359"/>
    </location>
</feature>
<feature type="region of interest" description="Disordered" evidence="1">
    <location>
        <begin position="458"/>
        <end position="550"/>
    </location>
</feature>
<feature type="compositionally biased region" description="Polar residues" evidence="1">
    <location>
        <begin position="268"/>
        <end position="279"/>
    </location>
</feature>
<feature type="compositionally biased region" description="Basic residues" evidence="1">
    <location>
        <begin position="330"/>
        <end position="349"/>
    </location>
</feature>
<feature type="compositionally biased region" description="Polar residues" evidence="1">
    <location>
        <begin position="504"/>
        <end position="515"/>
    </location>
</feature>
<feature type="compositionally biased region" description="Low complexity" evidence="1">
    <location>
        <begin position="524"/>
        <end position="533"/>
    </location>
</feature>
<feature type="compositionally biased region" description="Low complexity" evidence="1">
    <location>
        <begin position="540"/>
        <end position="550"/>
    </location>
</feature>
<organismHost>
    <name type="scientific">Solanum lycopersicum</name>
    <name type="common">Tomato</name>
    <name type="synonym">Lycopersicon esculentum</name>
    <dbReference type="NCBI Taxonomy" id="4081"/>
</organismHost>
<organismHost>
    <name type="scientific">Solanum melongena</name>
    <name type="common">eggplant</name>
    <dbReference type="NCBI Taxonomy" id="4111"/>
</organismHost>
<organismHost>
    <name type="scientific">Solanum seaforthianum</name>
    <name type="common">Brazilian nightshade</name>
    <dbReference type="NCBI Taxonomy" id="45840"/>
</organismHost>
<dbReference type="EMBL" id="J04374">
    <property type="protein sequence ID" value="AAA43038.1"/>
    <property type="molecule type" value="Genomic_RNA"/>
</dbReference>
<dbReference type="PIR" id="JQ0103">
    <property type="entry name" value="JQ0103"/>
</dbReference>
<dbReference type="RefSeq" id="NP_040967.1">
    <property type="nucleotide sequence ID" value="NC_001480.1"/>
</dbReference>
<dbReference type="GeneID" id="1493961"/>
<dbReference type="KEGG" id="vg:1493961"/>
<dbReference type="OrthoDB" id="19242at10239"/>
<dbReference type="Proteomes" id="UP000008664">
    <property type="component" value="Genome"/>
</dbReference>
<dbReference type="InterPro" id="IPR004935">
    <property type="entry name" value="45/70kDa_tymovirus"/>
</dbReference>
<dbReference type="Pfam" id="PF03251">
    <property type="entry name" value="Tymo_45kd_70kd"/>
    <property type="match status" value="1"/>
</dbReference>
<protein>
    <recommendedName>
        <fullName>70 kDa protein</fullName>
    </recommendedName>
</protein>
<evidence type="ECO:0000256" key="1">
    <source>
        <dbReference type="SAM" id="MobiDB-lite"/>
    </source>
</evidence>
<evidence type="ECO:0000305" key="2"/>
<organism>
    <name type="scientific">Eggplant mosaic virus</name>
    <dbReference type="NCBI Taxonomy" id="12151"/>
    <lineage>
        <taxon>Viruses</taxon>
        <taxon>Riboviria</taxon>
        <taxon>Orthornavirae</taxon>
        <taxon>Kitrinoviricota</taxon>
        <taxon>Alsuviricetes</taxon>
        <taxon>Tymovirales</taxon>
        <taxon>Tymoviridae</taxon>
        <taxon>Tymovirus</taxon>
        <taxon>Tymovirus melongenae</taxon>
    </lineage>
</organism>
<accession>P20129</accession>
<name>P69_EPMV</name>